<protein>
    <recommendedName>
        <fullName evidence="1">Translation initiation factor IF-3</fullName>
    </recommendedName>
</protein>
<comment type="function">
    <text evidence="1">IF-3 binds to the 30S ribosomal subunit and shifts the equilibrium between 70S ribosomes and their 50S and 30S subunits in favor of the free subunits, thus enhancing the availability of 30S subunits on which protein synthesis initiation begins.</text>
</comment>
<comment type="subunit">
    <text evidence="1">Monomer.</text>
</comment>
<comment type="subcellular location">
    <subcellularLocation>
        <location evidence="1">Cytoplasm</location>
    </subcellularLocation>
</comment>
<comment type="similarity">
    <text evidence="1">Belongs to the IF-3 family.</text>
</comment>
<sequence length="175" mass="19770">MALNLRINRQIRAPRVRVIGSAGEQLGILSIKEALDLAKEANLDLVEVASNSEPPVCKIMDYGKYRYDVTKKEKDSKKAQHQVRIKEVKLKPNIDDNDFLTKAKQARAFIEKGNKVKVSCMFRGRELAYPEHGYKVIQRMCQGLEDIGFVESEPKLNGRSLICVIAPGTLKTKKK</sequence>
<keyword id="KW-0963">Cytoplasm</keyword>
<keyword id="KW-0396">Initiation factor</keyword>
<keyword id="KW-0648">Protein biosynthesis</keyword>
<keyword id="KW-1185">Reference proteome</keyword>
<organism>
    <name type="scientific">Chlamydia trachomatis serovar D (strain ATCC VR-885 / DSM 19411 / UW-3/Cx)</name>
    <dbReference type="NCBI Taxonomy" id="272561"/>
    <lineage>
        <taxon>Bacteria</taxon>
        <taxon>Pseudomonadati</taxon>
        <taxon>Chlamydiota</taxon>
        <taxon>Chlamydiia</taxon>
        <taxon>Chlamydiales</taxon>
        <taxon>Chlamydiaceae</taxon>
        <taxon>Chlamydia/Chlamydophila group</taxon>
        <taxon>Chlamydia</taxon>
    </lineage>
</organism>
<evidence type="ECO:0000255" key="1">
    <source>
        <dbReference type="HAMAP-Rule" id="MF_00080"/>
    </source>
</evidence>
<name>IF3_CHLTR</name>
<accession>O84840</accession>
<reference key="1">
    <citation type="journal article" date="1998" name="Science">
        <title>Genome sequence of an obligate intracellular pathogen of humans: Chlamydia trachomatis.</title>
        <authorList>
            <person name="Stephens R.S."/>
            <person name="Kalman S."/>
            <person name="Lammel C.J."/>
            <person name="Fan J."/>
            <person name="Marathe R."/>
            <person name="Aravind L."/>
            <person name="Mitchell W.P."/>
            <person name="Olinger L."/>
            <person name="Tatusov R.L."/>
            <person name="Zhao Q."/>
            <person name="Koonin E.V."/>
            <person name="Davis R.W."/>
        </authorList>
    </citation>
    <scope>NUCLEOTIDE SEQUENCE [LARGE SCALE GENOMIC DNA]</scope>
    <source>
        <strain>ATCC VR-885 / DSM 19411 / UW-3/Cx</strain>
    </source>
</reference>
<dbReference type="EMBL" id="AE001273">
    <property type="protein sequence ID" value="AAC68430.2"/>
    <property type="molecule type" value="Genomic_DNA"/>
</dbReference>
<dbReference type="PIR" id="A71465">
    <property type="entry name" value="A71465"/>
</dbReference>
<dbReference type="RefSeq" id="NP_220354.1">
    <property type="nucleotide sequence ID" value="NC_000117.1"/>
</dbReference>
<dbReference type="RefSeq" id="WP_010725362.1">
    <property type="nucleotide sequence ID" value="NC_000117.1"/>
</dbReference>
<dbReference type="SMR" id="O84840"/>
<dbReference type="FunCoup" id="O84840">
    <property type="interactions" value="270"/>
</dbReference>
<dbReference type="STRING" id="272561.CT_833"/>
<dbReference type="EnsemblBacteria" id="AAC68430">
    <property type="protein sequence ID" value="AAC68430"/>
    <property type="gene ID" value="CT_833"/>
</dbReference>
<dbReference type="GeneID" id="884636"/>
<dbReference type="KEGG" id="ctr:CT_833"/>
<dbReference type="PATRIC" id="fig|272561.5.peg.920"/>
<dbReference type="HOGENOM" id="CLU_054919_3_2_0"/>
<dbReference type="InParanoid" id="O84840"/>
<dbReference type="OrthoDB" id="9806014at2"/>
<dbReference type="Proteomes" id="UP000000431">
    <property type="component" value="Chromosome"/>
</dbReference>
<dbReference type="GO" id="GO:0005829">
    <property type="term" value="C:cytosol"/>
    <property type="evidence" value="ECO:0000318"/>
    <property type="project" value="GO_Central"/>
</dbReference>
<dbReference type="GO" id="GO:0043022">
    <property type="term" value="F:ribosome binding"/>
    <property type="evidence" value="ECO:0000318"/>
    <property type="project" value="GO_Central"/>
</dbReference>
<dbReference type="GO" id="GO:0003743">
    <property type="term" value="F:translation initiation factor activity"/>
    <property type="evidence" value="ECO:0000318"/>
    <property type="project" value="GO_Central"/>
</dbReference>
<dbReference type="GO" id="GO:0032790">
    <property type="term" value="P:ribosome disassembly"/>
    <property type="evidence" value="ECO:0000318"/>
    <property type="project" value="GO_Central"/>
</dbReference>
<dbReference type="FunFam" id="3.10.20.80:FF:000001">
    <property type="entry name" value="Translation initiation factor IF-3"/>
    <property type="match status" value="1"/>
</dbReference>
<dbReference type="FunFam" id="3.30.110.10:FF:000001">
    <property type="entry name" value="Translation initiation factor IF-3"/>
    <property type="match status" value="1"/>
</dbReference>
<dbReference type="Gene3D" id="3.30.110.10">
    <property type="entry name" value="Translation initiation factor 3 (IF-3), C-terminal domain"/>
    <property type="match status" value="1"/>
</dbReference>
<dbReference type="Gene3D" id="3.10.20.80">
    <property type="entry name" value="Translation initiation factor 3 (IF-3), N-terminal domain"/>
    <property type="match status" value="1"/>
</dbReference>
<dbReference type="HAMAP" id="MF_00080">
    <property type="entry name" value="IF_3"/>
    <property type="match status" value="1"/>
</dbReference>
<dbReference type="InterPro" id="IPR036788">
    <property type="entry name" value="T_IF-3_C_sf"/>
</dbReference>
<dbReference type="InterPro" id="IPR036787">
    <property type="entry name" value="T_IF-3_N_sf"/>
</dbReference>
<dbReference type="InterPro" id="IPR019813">
    <property type="entry name" value="Translation_initiation_fac3_CS"/>
</dbReference>
<dbReference type="InterPro" id="IPR001288">
    <property type="entry name" value="Translation_initiation_fac_3"/>
</dbReference>
<dbReference type="InterPro" id="IPR019815">
    <property type="entry name" value="Translation_initiation_fac_3_C"/>
</dbReference>
<dbReference type="InterPro" id="IPR019814">
    <property type="entry name" value="Translation_initiation_fac_3_N"/>
</dbReference>
<dbReference type="NCBIfam" id="TIGR00168">
    <property type="entry name" value="infC"/>
    <property type="match status" value="1"/>
</dbReference>
<dbReference type="PANTHER" id="PTHR10938">
    <property type="entry name" value="TRANSLATION INITIATION FACTOR IF-3"/>
    <property type="match status" value="1"/>
</dbReference>
<dbReference type="PANTHER" id="PTHR10938:SF0">
    <property type="entry name" value="TRANSLATION INITIATION FACTOR IF-3, MITOCHONDRIAL"/>
    <property type="match status" value="1"/>
</dbReference>
<dbReference type="Pfam" id="PF00707">
    <property type="entry name" value="IF3_C"/>
    <property type="match status" value="1"/>
</dbReference>
<dbReference type="Pfam" id="PF05198">
    <property type="entry name" value="IF3_N"/>
    <property type="match status" value="1"/>
</dbReference>
<dbReference type="SUPFAM" id="SSF55200">
    <property type="entry name" value="Translation initiation factor IF3, C-terminal domain"/>
    <property type="match status" value="1"/>
</dbReference>
<dbReference type="SUPFAM" id="SSF54364">
    <property type="entry name" value="Translation initiation factor IF3, N-terminal domain"/>
    <property type="match status" value="1"/>
</dbReference>
<dbReference type="PROSITE" id="PS00938">
    <property type="entry name" value="IF3"/>
    <property type="match status" value="1"/>
</dbReference>
<feature type="chain" id="PRO_0000177506" description="Translation initiation factor IF-3">
    <location>
        <begin position="1"/>
        <end position="175"/>
    </location>
</feature>
<gene>
    <name evidence="1" type="primary">infC</name>
    <name type="ordered locus">CT_833</name>
</gene>
<proteinExistence type="inferred from homology"/>